<evidence type="ECO:0000255" key="1">
    <source>
        <dbReference type="HAMAP-Rule" id="MF_01382"/>
    </source>
</evidence>
<dbReference type="EC" id="7.4.2.8" evidence="1"/>
<dbReference type="EMBL" id="AM421808">
    <property type="protein sequence ID" value="CAM10670.1"/>
    <property type="molecule type" value="Genomic_DNA"/>
</dbReference>
<dbReference type="RefSeq" id="WP_002248090.1">
    <property type="nucleotide sequence ID" value="NC_008767.1"/>
</dbReference>
<dbReference type="SMR" id="A1KUX1"/>
<dbReference type="KEGG" id="nmc:NMC1464"/>
<dbReference type="HOGENOM" id="CLU_005314_3_0_4"/>
<dbReference type="Proteomes" id="UP000002286">
    <property type="component" value="Chromosome"/>
</dbReference>
<dbReference type="GO" id="GO:0031522">
    <property type="term" value="C:cell envelope Sec protein transport complex"/>
    <property type="evidence" value="ECO:0007669"/>
    <property type="project" value="TreeGrafter"/>
</dbReference>
<dbReference type="GO" id="GO:0005829">
    <property type="term" value="C:cytosol"/>
    <property type="evidence" value="ECO:0007669"/>
    <property type="project" value="TreeGrafter"/>
</dbReference>
<dbReference type="GO" id="GO:0005886">
    <property type="term" value="C:plasma membrane"/>
    <property type="evidence" value="ECO:0007669"/>
    <property type="project" value="UniProtKB-SubCell"/>
</dbReference>
<dbReference type="GO" id="GO:0005524">
    <property type="term" value="F:ATP binding"/>
    <property type="evidence" value="ECO:0007669"/>
    <property type="project" value="UniProtKB-UniRule"/>
</dbReference>
<dbReference type="GO" id="GO:0046872">
    <property type="term" value="F:metal ion binding"/>
    <property type="evidence" value="ECO:0007669"/>
    <property type="project" value="UniProtKB-KW"/>
</dbReference>
<dbReference type="GO" id="GO:0008564">
    <property type="term" value="F:protein-exporting ATPase activity"/>
    <property type="evidence" value="ECO:0007669"/>
    <property type="project" value="UniProtKB-EC"/>
</dbReference>
<dbReference type="GO" id="GO:0065002">
    <property type="term" value="P:intracellular protein transmembrane transport"/>
    <property type="evidence" value="ECO:0007669"/>
    <property type="project" value="UniProtKB-UniRule"/>
</dbReference>
<dbReference type="GO" id="GO:0017038">
    <property type="term" value="P:protein import"/>
    <property type="evidence" value="ECO:0007669"/>
    <property type="project" value="InterPro"/>
</dbReference>
<dbReference type="GO" id="GO:0006605">
    <property type="term" value="P:protein targeting"/>
    <property type="evidence" value="ECO:0007669"/>
    <property type="project" value="UniProtKB-UniRule"/>
</dbReference>
<dbReference type="GO" id="GO:0043952">
    <property type="term" value="P:protein transport by the Sec complex"/>
    <property type="evidence" value="ECO:0007669"/>
    <property type="project" value="TreeGrafter"/>
</dbReference>
<dbReference type="CDD" id="cd17928">
    <property type="entry name" value="DEXDc_SecA"/>
    <property type="match status" value="1"/>
</dbReference>
<dbReference type="CDD" id="cd18803">
    <property type="entry name" value="SF2_C_secA"/>
    <property type="match status" value="1"/>
</dbReference>
<dbReference type="FunFam" id="3.40.50.300:FF:000113">
    <property type="entry name" value="Preprotein translocase subunit SecA"/>
    <property type="match status" value="1"/>
</dbReference>
<dbReference type="FunFam" id="3.90.1440.10:FF:000001">
    <property type="entry name" value="Preprotein translocase subunit SecA"/>
    <property type="match status" value="1"/>
</dbReference>
<dbReference type="FunFam" id="1.10.3060.10:FF:000003">
    <property type="entry name" value="Protein translocase subunit SecA"/>
    <property type="match status" value="1"/>
</dbReference>
<dbReference type="FunFam" id="3.40.50.300:FF:000334">
    <property type="entry name" value="Protein translocase subunit SecA"/>
    <property type="match status" value="1"/>
</dbReference>
<dbReference type="Gene3D" id="1.10.3060.10">
    <property type="entry name" value="Helical scaffold and wing domains of SecA"/>
    <property type="match status" value="1"/>
</dbReference>
<dbReference type="Gene3D" id="3.40.50.300">
    <property type="entry name" value="P-loop containing nucleotide triphosphate hydrolases"/>
    <property type="match status" value="2"/>
</dbReference>
<dbReference type="Gene3D" id="3.90.1440.10">
    <property type="entry name" value="SecA, preprotein cross-linking domain"/>
    <property type="match status" value="1"/>
</dbReference>
<dbReference type="HAMAP" id="MF_01382">
    <property type="entry name" value="SecA"/>
    <property type="match status" value="1"/>
</dbReference>
<dbReference type="InterPro" id="IPR014001">
    <property type="entry name" value="Helicase_ATP-bd"/>
</dbReference>
<dbReference type="InterPro" id="IPR001650">
    <property type="entry name" value="Helicase_C-like"/>
</dbReference>
<dbReference type="InterPro" id="IPR027417">
    <property type="entry name" value="P-loop_NTPase"/>
</dbReference>
<dbReference type="InterPro" id="IPR004027">
    <property type="entry name" value="SEC_C_motif"/>
</dbReference>
<dbReference type="InterPro" id="IPR000185">
    <property type="entry name" value="SecA"/>
</dbReference>
<dbReference type="InterPro" id="IPR020937">
    <property type="entry name" value="SecA_CS"/>
</dbReference>
<dbReference type="InterPro" id="IPR011115">
    <property type="entry name" value="SecA_DEAD"/>
</dbReference>
<dbReference type="InterPro" id="IPR014018">
    <property type="entry name" value="SecA_motor_DEAD"/>
</dbReference>
<dbReference type="InterPro" id="IPR011130">
    <property type="entry name" value="SecA_preprotein_X-link_dom"/>
</dbReference>
<dbReference type="InterPro" id="IPR044722">
    <property type="entry name" value="SecA_SF2_C"/>
</dbReference>
<dbReference type="InterPro" id="IPR011116">
    <property type="entry name" value="SecA_Wing/Scaffold"/>
</dbReference>
<dbReference type="InterPro" id="IPR036266">
    <property type="entry name" value="SecA_Wing/Scaffold_sf"/>
</dbReference>
<dbReference type="InterPro" id="IPR036670">
    <property type="entry name" value="SecA_X-link_sf"/>
</dbReference>
<dbReference type="NCBIfam" id="NF009538">
    <property type="entry name" value="PRK12904.1"/>
    <property type="match status" value="1"/>
</dbReference>
<dbReference type="NCBIfam" id="TIGR00963">
    <property type="entry name" value="secA"/>
    <property type="match status" value="1"/>
</dbReference>
<dbReference type="PANTHER" id="PTHR30612:SF0">
    <property type="entry name" value="CHLOROPLAST PROTEIN-TRANSPORTING ATPASE"/>
    <property type="match status" value="1"/>
</dbReference>
<dbReference type="PANTHER" id="PTHR30612">
    <property type="entry name" value="SECA INNER MEMBRANE COMPONENT OF SEC PROTEIN SECRETION SYSTEM"/>
    <property type="match status" value="1"/>
</dbReference>
<dbReference type="Pfam" id="PF21090">
    <property type="entry name" value="P-loop_SecA"/>
    <property type="match status" value="1"/>
</dbReference>
<dbReference type="Pfam" id="PF02810">
    <property type="entry name" value="SEC-C"/>
    <property type="match status" value="1"/>
</dbReference>
<dbReference type="Pfam" id="PF07517">
    <property type="entry name" value="SecA_DEAD"/>
    <property type="match status" value="1"/>
</dbReference>
<dbReference type="Pfam" id="PF01043">
    <property type="entry name" value="SecA_PP_bind"/>
    <property type="match status" value="1"/>
</dbReference>
<dbReference type="Pfam" id="PF07516">
    <property type="entry name" value="SecA_SW"/>
    <property type="match status" value="1"/>
</dbReference>
<dbReference type="PRINTS" id="PR00906">
    <property type="entry name" value="SECA"/>
</dbReference>
<dbReference type="SMART" id="SM00957">
    <property type="entry name" value="SecA_DEAD"/>
    <property type="match status" value="1"/>
</dbReference>
<dbReference type="SMART" id="SM00958">
    <property type="entry name" value="SecA_PP_bind"/>
    <property type="match status" value="1"/>
</dbReference>
<dbReference type="SUPFAM" id="SSF81886">
    <property type="entry name" value="Helical scaffold and wing domains of SecA"/>
    <property type="match status" value="1"/>
</dbReference>
<dbReference type="SUPFAM" id="SSF52540">
    <property type="entry name" value="P-loop containing nucleoside triphosphate hydrolases"/>
    <property type="match status" value="2"/>
</dbReference>
<dbReference type="SUPFAM" id="SSF81767">
    <property type="entry name" value="Pre-protein crosslinking domain of SecA"/>
    <property type="match status" value="1"/>
</dbReference>
<dbReference type="PROSITE" id="PS01312">
    <property type="entry name" value="SECA"/>
    <property type="match status" value="1"/>
</dbReference>
<dbReference type="PROSITE" id="PS51196">
    <property type="entry name" value="SECA_MOTOR_DEAD"/>
    <property type="match status" value="1"/>
</dbReference>
<name>SECA_NEIMF</name>
<sequence length="916" mass="103330">MLTNIAKKIFGSRNDRLLKQYRKSVARINALEEQMQALSDADLQAKTAEFKQRLADGQTLDGILPEAFAVCREASRRTLGMRHFDVQLIGGMVLHDGKIAEMRTGEGKTLVATLAVYLNALAGKGVHVVTVNDYLASRDAGIMEPLYNFLGLTVGVIISDMQPFDRQNAYAADITYGTNNEFGFDYLRDNMVTDQYDKVQRELNFAVVDEVDSILIDEARTPLIISGQADDNIQLYQIMNTVPPHLVRQETEEGEGDYWVDEKAHQVILSEAGHEHAEQILTQMGLLAENDSLYSAANIALMHHLMAALRAHSLFHKDQHYVIQDGEIVIVDEFTGRLMSGRRWSEGLHQAVEAKEGVEIKRENQTLASITFQNYFRLYTKLSGMTGTADTEAFEFQSIYNLETVIIPTNRPVQRKDFNDQIFRSAEEKFEAVVKDIEECHKRGQPVLVGTTSIENSELVSHLLQKAGLPHNVLNAKEHEREALIVAQAGKVGAITVATNMAGRGTDIVLGGNLKHQTDAIRADETLSDEEKQAQIAALEDGWQAEHDKVMEAGGLHIIGTERHESRRIDNQLRGRSGRQGDPGSSRFYLSFEDPLLRLFALDRAAAILNRLAPERGVAIEHNLLTRQIEGAQRKVEGRNFDMRKQVLEYDDVANEQRKVIYSQRNEILTSKDISDLMQEIRSDVVSDLVDTYMPPDSMEEQWDIPTLENRLAAEFRLHEDIQSWLKADNAIDGQDIKERLIERIENEYAAKTELVGKQAMADFERNVMLQVIDNQWREHLAAMDYLRQGIHLRSYAQKNPKQEYKREAFTMFQDLWNGIKFHIASLLTSVQIEQNPVAVVEEQPIGNIQSIHSESPDMEELLGQSQTDLVTEAFNPDGTDFSPEALEARGQIVHRNDPCPCGSGLKYKQCHGKLA</sequence>
<keyword id="KW-0067">ATP-binding</keyword>
<keyword id="KW-0997">Cell inner membrane</keyword>
<keyword id="KW-1003">Cell membrane</keyword>
<keyword id="KW-0963">Cytoplasm</keyword>
<keyword id="KW-0472">Membrane</keyword>
<keyword id="KW-0479">Metal-binding</keyword>
<keyword id="KW-0547">Nucleotide-binding</keyword>
<keyword id="KW-0653">Protein transport</keyword>
<keyword id="KW-1278">Translocase</keyword>
<keyword id="KW-0811">Translocation</keyword>
<keyword id="KW-0813">Transport</keyword>
<keyword id="KW-0862">Zinc</keyword>
<reference key="1">
    <citation type="journal article" date="2007" name="PLoS Genet.">
        <title>Meningococcal genetic variation mechanisms viewed through comparative analysis of serogroup C strain FAM18.</title>
        <authorList>
            <person name="Bentley S.D."/>
            <person name="Vernikos G.S."/>
            <person name="Snyder L.A.S."/>
            <person name="Churcher C."/>
            <person name="Arrowsmith C."/>
            <person name="Chillingworth T."/>
            <person name="Cronin A."/>
            <person name="Davis P.H."/>
            <person name="Holroyd N.E."/>
            <person name="Jagels K."/>
            <person name="Maddison M."/>
            <person name="Moule S."/>
            <person name="Rabbinowitsch E."/>
            <person name="Sharp S."/>
            <person name="Unwin L."/>
            <person name="Whitehead S."/>
            <person name="Quail M.A."/>
            <person name="Achtman M."/>
            <person name="Barrell B.G."/>
            <person name="Saunders N.J."/>
            <person name="Parkhill J."/>
        </authorList>
    </citation>
    <scope>NUCLEOTIDE SEQUENCE [LARGE SCALE GENOMIC DNA]</scope>
    <source>
        <strain>ATCC 700532 / DSM 15464 / FAM18</strain>
    </source>
</reference>
<comment type="function">
    <text evidence="1">Part of the Sec protein translocase complex. Interacts with the SecYEG preprotein conducting channel. Has a central role in coupling the hydrolysis of ATP to the transfer of proteins into and across the cell membrane, serving both as a receptor for the preprotein-SecB complex and as an ATP-driven molecular motor driving the stepwise translocation of polypeptide chains across the membrane.</text>
</comment>
<comment type="catalytic activity">
    <reaction evidence="1">
        <text>ATP + H2O + cellular proteinSide 1 = ADP + phosphate + cellular proteinSide 2.</text>
        <dbReference type="EC" id="7.4.2.8"/>
    </reaction>
</comment>
<comment type="cofactor">
    <cofactor evidence="1">
        <name>Zn(2+)</name>
        <dbReference type="ChEBI" id="CHEBI:29105"/>
    </cofactor>
    <text evidence="1">May bind 1 zinc ion per subunit.</text>
</comment>
<comment type="subunit">
    <text evidence="1">Monomer and homodimer. Part of the essential Sec protein translocation apparatus which comprises SecA, SecYEG and auxiliary proteins SecDF-YajC and YidC.</text>
</comment>
<comment type="subcellular location">
    <subcellularLocation>
        <location evidence="1">Cell inner membrane</location>
        <topology evidence="1">Peripheral membrane protein</topology>
        <orientation evidence="1">Cytoplasmic side</orientation>
    </subcellularLocation>
    <subcellularLocation>
        <location evidence="1">Cytoplasm</location>
    </subcellularLocation>
    <text evidence="1">Distribution is 50-50.</text>
</comment>
<comment type="similarity">
    <text evidence="1">Belongs to the SecA family.</text>
</comment>
<proteinExistence type="inferred from homology"/>
<gene>
    <name evidence="1" type="primary">secA</name>
    <name type="ordered locus">NMC1464</name>
</gene>
<protein>
    <recommendedName>
        <fullName evidence="1">Protein translocase subunit SecA</fullName>
        <ecNumber evidence="1">7.4.2.8</ecNumber>
    </recommendedName>
</protein>
<feature type="chain" id="PRO_0000320864" description="Protein translocase subunit SecA">
    <location>
        <begin position="1"/>
        <end position="916"/>
    </location>
</feature>
<feature type="binding site" evidence="1">
    <location>
        <position position="87"/>
    </location>
    <ligand>
        <name>ATP</name>
        <dbReference type="ChEBI" id="CHEBI:30616"/>
    </ligand>
</feature>
<feature type="binding site" evidence="1">
    <location>
        <begin position="105"/>
        <end position="109"/>
    </location>
    <ligand>
        <name>ATP</name>
        <dbReference type="ChEBI" id="CHEBI:30616"/>
    </ligand>
</feature>
<feature type="binding site" evidence="1">
    <location>
        <position position="507"/>
    </location>
    <ligand>
        <name>ATP</name>
        <dbReference type="ChEBI" id="CHEBI:30616"/>
    </ligand>
</feature>
<feature type="binding site" evidence="1">
    <location>
        <position position="900"/>
    </location>
    <ligand>
        <name>Zn(2+)</name>
        <dbReference type="ChEBI" id="CHEBI:29105"/>
    </ligand>
</feature>
<feature type="binding site" evidence="1">
    <location>
        <position position="902"/>
    </location>
    <ligand>
        <name>Zn(2+)</name>
        <dbReference type="ChEBI" id="CHEBI:29105"/>
    </ligand>
</feature>
<feature type="binding site" evidence="1">
    <location>
        <position position="911"/>
    </location>
    <ligand>
        <name>Zn(2+)</name>
        <dbReference type="ChEBI" id="CHEBI:29105"/>
    </ligand>
</feature>
<feature type="binding site" evidence="1">
    <location>
        <position position="912"/>
    </location>
    <ligand>
        <name>Zn(2+)</name>
        <dbReference type="ChEBI" id="CHEBI:29105"/>
    </ligand>
</feature>
<accession>A1KUX1</accession>
<organism>
    <name type="scientific">Neisseria meningitidis serogroup C / serotype 2a (strain ATCC 700532 / DSM 15464 / FAM18)</name>
    <dbReference type="NCBI Taxonomy" id="272831"/>
    <lineage>
        <taxon>Bacteria</taxon>
        <taxon>Pseudomonadati</taxon>
        <taxon>Pseudomonadota</taxon>
        <taxon>Betaproteobacteria</taxon>
        <taxon>Neisseriales</taxon>
        <taxon>Neisseriaceae</taxon>
        <taxon>Neisseria</taxon>
    </lineage>
</organism>